<dbReference type="EC" id="2.5.1.19" evidence="1"/>
<dbReference type="EMBL" id="CP000411">
    <property type="protein sequence ID" value="ABJ56145.1"/>
    <property type="molecule type" value="Genomic_DNA"/>
</dbReference>
<dbReference type="RefSeq" id="WP_002821251.1">
    <property type="nucleotide sequence ID" value="NC_008528.1"/>
</dbReference>
<dbReference type="SMR" id="Q04HC7"/>
<dbReference type="STRING" id="203123.OEOE_0152"/>
<dbReference type="KEGG" id="ooe:OEOE_0152"/>
<dbReference type="PATRIC" id="fig|203123.7.peg.158"/>
<dbReference type="eggNOG" id="COG0128">
    <property type="taxonomic scope" value="Bacteria"/>
</dbReference>
<dbReference type="HOGENOM" id="CLU_024321_0_1_9"/>
<dbReference type="UniPathway" id="UPA00053">
    <property type="reaction ID" value="UER00089"/>
</dbReference>
<dbReference type="Proteomes" id="UP000000774">
    <property type="component" value="Chromosome"/>
</dbReference>
<dbReference type="GO" id="GO:0005737">
    <property type="term" value="C:cytoplasm"/>
    <property type="evidence" value="ECO:0007669"/>
    <property type="project" value="UniProtKB-SubCell"/>
</dbReference>
<dbReference type="GO" id="GO:0003866">
    <property type="term" value="F:3-phosphoshikimate 1-carboxyvinyltransferase activity"/>
    <property type="evidence" value="ECO:0007669"/>
    <property type="project" value="UniProtKB-UniRule"/>
</dbReference>
<dbReference type="GO" id="GO:0008652">
    <property type="term" value="P:amino acid biosynthetic process"/>
    <property type="evidence" value="ECO:0007669"/>
    <property type="project" value="UniProtKB-KW"/>
</dbReference>
<dbReference type="GO" id="GO:0009073">
    <property type="term" value="P:aromatic amino acid family biosynthetic process"/>
    <property type="evidence" value="ECO:0007669"/>
    <property type="project" value="UniProtKB-KW"/>
</dbReference>
<dbReference type="GO" id="GO:0009423">
    <property type="term" value="P:chorismate biosynthetic process"/>
    <property type="evidence" value="ECO:0007669"/>
    <property type="project" value="UniProtKB-UniRule"/>
</dbReference>
<dbReference type="CDD" id="cd01556">
    <property type="entry name" value="EPSP_synthase"/>
    <property type="match status" value="1"/>
</dbReference>
<dbReference type="FunFam" id="3.65.10.10:FF:000005">
    <property type="entry name" value="3-phosphoshikimate 1-carboxyvinyltransferase"/>
    <property type="match status" value="1"/>
</dbReference>
<dbReference type="Gene3D" id="3.65.10.10">
    <property type="entry name" value="Enolpyruvate transferase domain"/>
    <property type="match status" value="2"/>
</dbReference>
<dbReference type="HAMAP" id="MF_00210">
    <property type="entry name" value="EPSP_synth"/>
    <property type="match status" value="1"/>
</dbReference>
<dbReference type="InterPro" id="IPR001986">
    <property type="entry name" value="Enolpyruvate_Tfrase_dom"/>
</dbReference>
<dbReference type="InterPro" id="IPR036968">
    <property type="entry name" value="Enolpyruvate_Tfrase_sf"/>
</dbReference>
<dbReference type="InterPro" id="IPR006264">
    <property type="entry name" value="EPSP_synthase"/>
</dbReference>
<dbReference type="InterPro" id="IPR023193">
    <property type="entry name" value="EPSP_synthase_CS"/>
</dbReference>
<dbReference type="InterPro" id="IPR013792">
    <property type="entry name" value="RNA3'P_cycl/enolpyr_Trfase_a/b"/>
</dbReference>
<dbReference type="NCBIfam" id="TIGR01356">
    <property type="entry name" value="aroA"/>
    <property type="match status" value="1"/>
</dbReference>
<dbReference type="PANTHER" id="PTHR21090">
    <property type="entry name" value="AROM/DEHYDROQUINATE SYNTHASE"/>
    <property type="match status" value="1"/>
</dbReference>
<dbReference type="PANTHER" id="PTHR21090:SF5">
    <property type="entry name" value="PENTAFUNCTIONAL AROM POLYPEPTIDE"/>
    <property type="match status" value="1"/>
</dbReference>
<dbReference type="Pfam" id="PF00275">
    <property type="entry name" value="EPSP_synthase"/>
    <property type="match status" value="1"/>
</dbReference>
<dbReference type="PIRSF" id="PIRSF000505">
    <property type="entry name" value="EPSPS"/>
    <property type="match status" value="1"/>
</dbReference>
<dbReference type="SUPFAM" id="SSF55205">
    <property type="entry name" value="EPT/RTPC-like"/>
    <property type="match status" value="1"/>
</dbReference>
<dbReference type="PROSITE" id="PS00104">
    <property type="entry name" value="EPSP_SYNTHASE_1"/>
    <property type="match status" value="1"/>
</dbReference>
<reference key="1">
    <citation type="journal article" date="2006" name="Proc. Natl. Acad. Sci. U.S.A.">
        <title>Comparative genomics of the lactic acid bacteria.</title>
        <authorList>
            <person name="Makarova K.S."/>
            <person name="Slesarev A."/>
            <person name="Wolf Y.I."/>
            <person name="Sorokin A."/>
            <person name="Mirkin B."/>
            <person name="Koonin E.V."/>
            <person name="Pavlov A."/>
            <person name="Pavlova N."/>
            <person name="Karamychev V."/>
            <person name="Polouchine N."/>
            <person name="Shakhova V."/>
            <person name="Grigoriev I."/>
            <person name="Lou Y."/>
            <person name="Rohksar D."/>
            <person name="Lucas S."/>
            <person name="Huang K."/>
            <person name="Goodstein D.M."/>
            <person name="Hawkins T."/>
            <person name="Plengvidhya V."/>
            <person name="Welker D."/>
            <person name="Hughes J."/>
            <person name="Goh Y."/>
            <person name="Benson A."/>
            <person name="Baldwin K."/>
            <person name="Lee J.-H."/>
            <person name="Diaz-Muniz I."/>
            <person name="Dosti B."/>
            <person name="Smeianov V."/>
            <person name="Wechter W."/>
            <person name="Barabote R."/>
            <person name="Lorca G."/>
            <person name="Altermann E."/>
            <person name="Barrangou R."/>
            <person name="Ganesan B."/>
            <person name="Xie Y."/>
            <person name="Rawsthorne H."/>
            <person name="Tamir D."/>
            <person name="Parker C."/>
            <person name="Breidt F."/>
            <person name="Broadbent J.R."/>
            <person name="Hutkins R."/>
            <person name="O'Sullivan D."/>
            <person name="Steele J."/>
            <person name="Unlu G."/>
            <person name="Saier M.H. Jr."/>
            <person name="Klaenhammer T."/>
            <person name="Richardson P."/>
            <person name="Kozyavkin S."/>
            <person name="Weimer B.C."/>
            <person name="Mills D.A."/>
        </authorList>
    </citation>
    <scope>NUCLEOTIDE SEQUENCE [LARGE SCALE GENOMIC DNA]</scope>
    <source>
        <strain>ATCC BAA-331 / PSU-1</strain>
    </source>
</reference>
<evidence type="ECO:0000255" key="1">
    <source>
        <dbReference type="HAMAP-Rule" id="MF_00210"/>
    </source>
</evidence>
<sequence length="437" mass="47161">MKNLKTKQFQGLNGSLLLPGDKSISHRSIMVASISRGISRIKNFSNSTDCLSTLNAFLDLGVEIKKYGRDLIVYGSGLDAFKDPKKPLNMGNSGTTTRLLLGLLAGQSFNTCLVGDASLSKRPMYRVTNPITEVGGEFSLTGNGTLPITVIGHPSLKAFDYHLPIASAQVKSALIFSALQADEPSIIFEKEATRNHLEIMLNDFGADIKTNGLCITVMPRPKLSGRTISIPGDISSAAFFMVAASLLPNSCICLKKVGLNPTRIGIISVLKRMNANIEVKKTSNEAEAYGDIIVHSSNLHAVEITSKEIPNVIDELPILTLAASLAKGRTIISGAGELRVKETYRISVVAAELKKLGARIQEKSDGMVIDGCPKLQIPENNLATHGDHRIGMMLAVAALLVDTSKTITLNNPEAIKISYPNFFRDLDYLLNNPDMKG</sequence>
<keyword id="KW-0028">Amino-acid biosynthesis</keyword>
<keyword id="KW-0057">Aromatic amino acid biosynthesis</keyword>
<keyword id="KW-0963">Cytoplasm</keyword>
<keyword id="KW-1185">Reference proteome</keyword>
<keyword id="KW-0808">Transferase</keyword>
<comment type="function">
    <text evidence="1">Catalyzes the transfer of the enolpyruvyl moiety of phosphoenolpyruvate (PEP) to the 5-hydroxyl of shikimate-3-phosphate (S3P) to produce enolpyruvyl shikimate-3-phosphate and inorganic phosphate.</text>
</comment>
<comment type="catalytic activity">
    <reaction evidence="1">
        <text>3-phosphoshikimate + phosphoenolpyruvate = 5-O-(1-carboxyvinyl)-3-phosphoshikimate + phosphate</text>
        <dbReference type="Rhea" id="RHEA:21256"/>
        <dbReference type="ChEBI" id="CHEBI:43474"/>
        <dbReference type="ChEBI" id="CHEBI:57701"/>
        <dbReference type="ChEBI" id="CHEBI:58702"/>
        <dbReference type="ChEBI" id="CHEBI:145989"/>
        <dbReference type="EC" id="2.5.1.19"/>
    </reaction>
    <physiologicalReaction direction="left-to-right" evidence="1">
        <dbReference type="Rhea" id="RHEA:21257"/>
    </physiologicalReaction>
</comment>
<comment type="pathway">
    <text evidence="1">Metabolic intermediate biosynthesis; chorismate biosynthesis; chorismate from D-erythrose 4-phosphate and phosphoenolpyruvate: step 6/7.</text>
</comment>
<comment type="subunit">
    <text evidence="1">Monomer.</text>
</comment>
<comment type="subcellular location">
    <subcellularLocation>
        <location evidence="1">Cytoplasm</location>
    </subcellularLocation>
</comment>
<comment type="similarity">
    <text evidence="1">Belongs to the EPSP synthase family.</text>
</comment>
<name>AROA_OENOB</name>
<gene>
    <name evidence="1" type="primary">aroA</name>
    <name type="ordered locus">OEOE_0152</name>
</gene>
<feature type="chain" id="PRO_0000325366" description="3-phosphoshikimate 1-carboxyvinyltransferase">
    <location>
        <begin position="1"/>
        <end position="437"/>
    </location>
</feature>
<feature type="active site" description="Proton acceptor" evidence="1">
    <location>
        <position position="314"/>
    </location>
</feature>
<feature type="binding site" evidence="1">
    <location>
        <position position="22"/>
    </location>
    <ligand>
        <name>3-phosphoshikimate</name>
        <dbReference type="ChEBI" id="CHEBI:145989"/>
    </ligand>
</feature>
<feature type="binding site" evidence="1">
    <location>
        <position position="22"/>
    </location>
    <ligand>
        <name>phosphoenolpyruvate</name>
        <dbReference type="ChEBI" id="CHEBI:58702"/>
    </ligand>
</feature>
<feature type="binding site" evidence="1">
    <location>
        <position position="23"/>
    </location>
    <ligand>
        <name>3-phosphoshikimate</name>
        <dbReference type="ChEBI" id="CHEBI:145989"/>
    </ligand>
</feature>
<feature type="binding site" evidence="1">
    <location>
        <position position="27"/>
    </location>
    <ligand>
        <name>3-phosphoshikimate</name>
        <dbReference type="ChEBI" id="CHEBI:145989"/>
    </ligand>
</feature>
<feature type="binding site" evidence="1">
    <location>
        <position position="94"/>
    </location>
    <ligand>
        <name>phosphoenolpyruvate</name>
        <dbReference type="ChEBI" id="CHEBI:58702"/>
    </ligand>
</feature>
<feature type="binding site" evidence="1">
    <location>
        <position position="122"/>
    </location>
    <ligand>
        <name>phosphoenolpyruvate</name>
        <dbReference type="ChEBI" id="CHEBI:58702"/>
    </ligand>
</feature>
<feature type="binding site" evidence="1">
    <location>
        <position position="167"/>
    </location>
    <ligand>
        <name>3-phosphoshikimate</name>
        <dbReference type="ChEBI" id="CHEBI:145989"/>
    </ligand>
</feature>
<feature type="binding site" evidence="1">
    <location>
        <position position="169"/>
    </location>
    <ligand>
        <name>3-phosphoshikimate</name>
        <dbReference type="ChEBI" id="CHEBI:145989"/>
    </ligand>
</feature>
<feature type="binding site" evidence="1">
    <location>
        <position position="169"/>
    </location>
    <ligand>
        <name>phosphoenolpyruvate</name>
        <dbReference type="ChEBI" id="CHEBI:58702"/>
    </ligand>
</feature>
<feature type="binding site" evidence="1">
    <location>
        <position position="314"/>
    </location>
    <ligand>
        <name>3-phosphoshikimate</name>
        <dbReference type="ChEBI" id="CHEBI:145989"/>
    </ligand>
</feature>
<feature type="binding site" evidence="1">
    <location>
        <position position="341"/>
    </location>
    <ligand>
        <name>3-phosphoshikimate</name>
        <dbReference type="ChEBI" id="CHEBI:145989"/>
    </ligand>
</feature>
<feature type="binding site" evidence="1">
    <location>
        <position position="345"/>
    </location>
    <ligand>
        <name>phosphoenolpyruvate</name>
        <dbReference type="ChEBI" id="CHEBI:58702"/>
    </ligand>
</feature>
<feature type="binding site" evidence="1">
    <location>
        <position position="389"/>
    </location>
    <ligand>
        <name>phosphoenolpyruvate</name>
        <dbReference type="ChEBI" id="CHEBI:58702"/>
    </ligand>
</feature>
<protein>
    <recommendedName>
        <fullName evidence="1">3-phosphoshikimate 1-carboxyvinyltransferase</fullName>
        <ecNumber evidence="1">2.5.1.19</ecNumber>
    </recommendedName>
    <alternativeName>
        <fullName evidence="1">5-enolpyruvylshikimate-3-phosphate synthase</fullName>
        <shortName evidence="1">EPSP synthase</shortName>
        <shortName evidence="1">EPSPS</shortName>
    </alternativeName>
</protein>
<organism>
    <name type="scientific">Oenococcus oeni (strain ATCC BAA-331 / PSU-1)</name>
    <dbReference type="NCBI Taxonomy" id="203123"/>
    <lineage>
        <taxon>Bacteria</taxon>
        <taxon>Bacillati</taxon>
        <taxon>Bacillota</taxon>
        <taxon>Bacilli</taxon>
        <taxon>Lactobacillales</taxon>
        <taxon>Lactobacillaceae</taxon>
        <taxon>Oenococcus</taxon>
    </lineage>
</organism>
<accession>Q04HC7</accession>
<proteinExistence type="inferred from homology"/>